<keyword id="KW-0963">Cytoplasm</keyword>
<keyword id="KW-0238">DNA-binding</keyword>
<keyword id="KW-1185">Reference proteome</keyword>
<keyword id="KW-0804">Transcription</keyword>
<keyword id="KW-0805">Transcription regulation</keyword>
<name>Y2470_DESHY</name>
<evidence type="ECO:0000255" key="1">
    <source>
        <dbReference type="HAMAP-Rule" id="MF_00693"/>
    </source>
</evidence>
<feature type="chain" id="PRO_0000257058" description="Probable transcriptional regulatory protein DSY2470">
    <location>
        <begin position="1"/>
        <end position="252"/>
    </location>
</feature>
<dbReference type="EMBL" id="AP008230">
    <property type="protein sequence ID" value="BAE84259.1"/>
    <property type="molecule type" value="Genomic_DNA"/>
</dbReference>
<dbReference type="RefSeq" id="WP_011460362.1">
    <property type="nucleotide sequence ID" value="NC_007907.1"/>
</dbReference>
<dbReference type="SMR" id="Q24UN3"/>
<dbReference type="STRING" id="138119.DSY2470"/>
<dbReference type="KEGG" id="dsy:DSY2470"/>
<dbReference type="eggNOG" id="COG0217">
    <property type="taxonomic scope" value="Bacteria"/>
</dbReference>
<dbReference type="HOGENOM" id="CLU_062974_2_2_9"/>
<dbReference type="Proteomes" id="UP000001946">
    <property type="component" value="Chromosome"/>
</dbReference>
<dbReference type="GO" id="GO:0005829">
    <property type="term" value="C:cytosol"/>
    <property type="evidence" value="ECO:0007669"/>
    <property type="project" value="TreeGrafter"/>
</dbReference>
<dbReference type="GO" id="GO:0003677">
    <property type="term" value="F:DNA binding"/>
    <property type="evidence" value="ECO:0007669"/>
    <property type="project" value="UniProtKB-UniRule"/>
</dbReference>
<dbReference type="GO" id="GO:0006355">
    <property type="term" value="P:regulation of DNA-templated transcription"/>
    <property type="evidence" value="ECO:0007669"/>
    <property type="project" value="UniProtKB-UniRule"/>
</dbReference>
<dbReference type="FunFam" id="1.10.10.200:FF:000002">
    <property type="entry name" value="Probable transcriptional regulatory protein CLM62_37755"/>
    <property type="match status" value="1"/>
</dbReference>
<dbReference type="Gene3D" id="1.10.10.200">
    <property type="match status" value="1"/>
</dbReference>
<dbReference type="Gene3D" id="3.30.70.980">
    <property type="match status" value="2"/>
</dbReference>
<dbReference type="HAMAP" id="MF_00693">
    <property type="entry name" value="Transcrip_reg_TACO1"/>
    <property type="match status" value="1"/>
</dbReference>
<dbReference type="InterPro" id="IPR017856">
    <property type="entry name" value="Integrase-like_N"/>
</dbReference>
<dbReference type="InterPro" id="IPR048300">
    <property type="entry name" value="TACO1_YebC-like_2nd/3rd_dom"/>
</dbReference>
<dbReference type="InterPro" id="IPR049083">
    <property type="entry name" value="TACO1_YebC_N"/>
</dbReference>
<dbReference type="InterPro" id="IPR002876">
    <property type="entry name" value="Transcrip_reg_TACO1-like"/>
</dbReference>
<dbReference type="InterPro" id="IPR026564">
    <property type="entry name" value="Transcrip_reg_TACO1-like_dom3"/>
</dbReference>
<dbReference type="InterPro" id="IPR029072">
    <property type="entry name" value="YebC-like"/>
</dbReference>
<dbReference type="NCBIfam" id="NF001030">
    <property type="entry name" value="PRK00110.1"/>
    <property type="match status" value="1"/>
</dbReference>
<dbReference type="NCBIfam" id="NF009044">
    <property type="entry name" value="PRK12378.1"/>
    <property type="match status" value="1"/>
</dbReference>
<dbReference type="NCBIfam" id="TIGR01033">
    <property type="entry name" value="YebC/PmpR family DNA-binding transcriptional regulator"/>
    <property type="match status" value="1"/>
</dbReference>
<dbReference type="PANTHER" id="PTHR12532:SF6">
    <property type="entry name" value="TRANSCRIPTIONAL REGULATORY PROTEIN YEBC-RELATED"/>
    <property type="match status" value="1"/>
</dbReference>
<dbReference type="PANTHER" id="PTHR12532">
    <property type="entry name" value="TRANSLATIONAL ACTIVATOR OF CYTOCHROME C OXIDASE 1"/>
    <property type="match status" value="1"/>
</dbReference>
<dbReference type="Pfam" id="PF20772">
    <property type="entry name" value="TACO1_YebC_N"/>
    <property type="match status" value="1"/>
</dbReference>
<dbReference type="Pfam" id="PF01709">
    <property type="entry name" value="Transcrip_reg"/>
    <property type="match status" value="1"/>
</dbReference>
<dbReference type="SUPFAM" id="SSF75625">
    <property type="entry name" value="YebC-like"/>
    <property type="match status" value="1"/>
</dbReference>
<comment type="subcellular location">
    <subcellularLocation>
        <location evidence="1">Cytoplasm</location>
    </subcellularLocation>
</comment>
<comment type="similarity">
    <text evidence="1">Belongs to the TACO1 family.</text>
</comment>
<protein>
    <recommendedName>
        <fullName evidence="1">Probable transcriptional regulatory protein DSY2470</fullName>
    </recommendedName>
</protein>
<proteinExistence type="inferred from homology"/>
<sequence>MSGHSKWANIKHKKAKADAQKGKIFTKLGRELIVAARAGGGDPNNNFRLKIAIDNAKSANMPNDNIQRAIQKGVGGGEGESYEELRYEGYGPGGVAIMVDIMTDNRNRTAGEVRHIFSKHGGNLGETGCVNWMFTEKGQLMILKEDLKCDEDELMLLVLEAGAEDLQQDEESFVVYTAPGDMEAVRQALLDQGIAIEEAKINQVPQNTIEIADLEQAKKLVRMMELLEDHDDSQGVYANFEFADSIDEEELD</sequence>
<accession>Q24UN3</accession>
<gene>
    <name type="ordered locus">DSY2470</name>
</gene>
<organism>
    <name type="scientific">Desulfitobacterium hafniense (strain Y51)</name>
    <dbReference type="NCBI Taxonomy" id="138119"/>
    <lineage>
        <taxon>Bacteria</taxon>
        <taxon>Bacillati</taxon>
        <taxon>Bacillota</taxon>
        <taxon>Clostridia</taxon>
        <taxon>Eubacteriales</taxon>
        <taxon>Desulfitobacteriaceae</taxon>
        <taxon>Desulfitobacterium</taxon>
    </lineage>
</organism>
<reference key="1">
    <citation type="journal article" date="2006" name="J. Bacteriol.">
        <title>Complete genome sequence of the dehalorespiring bacterium Desulfitobacterium hafniense Y51 and comparison with Dehalococcoides ethenogenes 195.</title>
        <authorList>
            <person name="Nonaka H."/>
            <person name="Keresztes G."/>
            <person name="Shinoda Y."/>
            <person name="Ikenaga Y."/>
            <person name="Abe M."/>
            <person name="Naito K."/>
            <person name="Inatomi K."/>
            <person name="Furukawa K."/>
            <person name="Inui M."/>
            <person name="Yukawa H."/>
        </authorList>
    </citation>
    <scope>NUCLEOTIDE SEQUENCE [LARGE SCALE GENOMIC DNA]</scope>
    <source>
        <strain>Y51</strain>
    </source>
</reference>